<protein>
    <recommendedName>
        <fullName evidence="8">Polyglycine hydrolase</fullName>
        <ecNumber evidence="4 5 6 7">3.4.21.-</ecNumber>
    </recommendedName>
    <alternativeName>
        <fullName evidence="8">Chitinase modifying protein</fullName>
        <shortName evidence="8">EsCMP</shortName>
    </alternativeName>
</protein>
<keyword id="KW-1015">Disulfide bond</keyword>
<keyword id="KW-0325">Glycoprotein</keyword>
<keyword id="KW-0378">Hydrolase</keyword>
<keyword id="KW-0964">Secreted</keyword>
<keyword id="KW-0732">Signal</keyword>
<keyword id="KW-0843">Virulence</keyword>
<reference evidence="12" key="1">
    <citation type="journal article" date="2015" name="Protein Sci.">
        <title>Polyglycine hydrolases: Fungal beta-lactamase-like endoproteases that cleave polyglycine regions within plant class IV chitinases.</title>
        <authorList>
            <person name="Naumann T.A."/>
            <person name="Naldrett M.J."/>
            <person name="Ward T.J."/>
            <person name="Price N.P."/>
        </authorList>
    </citation>
    <scope>NUCLEOTIDE SEQUENCE [GENOMIC DNA]</scope>
    <scope>FUNCTION</scope>
    <scope>CATALYTIC ACTIVITY</scope>
    <scope>ACTIVITY REGULATION</scope>
    <scope>SUBCELLULAR LOCATION</scope>
    <scope>IDENTIFICATION BY MASS SPECTROMETRY</scope>
    <scope>ACTIVE SITE</scope>
    <scope>GLYCOSYLATION AT ASN-100; ASN-341; ASN-390 AND ASN-494</scope>
    <scope>MUTAGENESIS OF SER-370</scope>
    <source>
        <strain evidence="9">NRRL 54204</strain>
    </source>
</reference>
<reference evidence="10" key="2">
    <citation type="journal article" date="2014" name="Biochem. J.">
        <title>Polyglycine hydrolases secreted by Pleosporineae fungi that target the linker region of plant class IV chitinases.</title>
        <authorList>
            <person name="Naumann T.A."/>
            <person name="Wicklow D.T."/>
            <person name="Price N.P."/>
        </authorList>
    </citation>
    <scope>FUNCTION</scope>
    <scope>CATALYTIC ACTIVITY</scope>
    <scope>SUBCELLULAR LOCATION</scope>
</reference>
<reference evidence="10" key="3">
    <citation type="journal article" date="2022" name="Protein Expr. Purif.">
        <title>Production of selenomethionine labeled polyglycine hydrolases in Pichia pastoris.</title>
        <authorList>
            <person name="Naumann T.A."/>
            <person name="Sollenberger K.G."/>
            <person name="Hao G."/>
        </authorList>
    </citation>
    <scope>FUNCTION</scope>
    <scope>CATALYTIC ACTIVITY</scope>
    <scope>SUBCELLULAR LOCATION</scope>
</reference>
<reference evidence="10" key="4">
    <citation type="journal article" date="2023" name="Acta Crystallogr. D Struct. Biol.">
        <title>Crystal structure of a polyglycine hydrolase determined using a RoseTTAFold model.</title>
        <authorList>
            <person name="Dowling N.V."/>
            <person name="Naumann T.A."/>
            <person name="Price N.P.J."/>
            <person name="Rose D.R."/>
        </authorList>
    </citation>
    <scope>FUNCTION</scope>
    <scope>CATALYTIC ACTIVITY</scope>
    <scope>SUBCELLULAR LOCATION</scope>
</reference>
<sequence>MYTSRLLLSNLASCLSLATLVASFPANQQDLTFAKRNGTFEQSVFYGLTGPEVEAKLAKLKADGYRPTSLNIHGSTSDAKYAGIWTKQTGDDFETILGANKTVYDAWLDSHKAQGYVSTHVSATGGSSDALFAGVMEKVPSVANWIQVCGLDNPYAYANATIDEPMYIKGVSMYGAPNERQYCILGHENLVNYQQTVFYQTDYFKKDYAKLLQSETSKRHWRPVFIDLSEDLLPTPIFDDTSVGQWVARTDLSASELEAEIAAQKAKNLYAVHIAGAGSKGSKYAVLFAEHLSPLERKWTVTGEVTGFKTNDVVAKDMDAVMEEFMKKNSVRQAQVAASVNGTVVAERSYTWAESDRAVVKPTDKFGLGSVSKMFTYAATTNLLNEGLLNHTTRVYPFLGMNNPADNRSLDITVDHLLQHTAGYNRDIKPDIGFIFRNIALERNQTTPVSLRELIEYVYEQPLDFTPGTDSVYSNYGTMLLSYLIANITGESFNSYIHKNVLNGLDVELYPTSPELNANNPIVQETKYTFYPAQDPASTKQVSNANGGDGSIREEAIGAFGLRASASTISQFLANHAAYDIGPRQAYTYRDGTIVGSRAFAQSQDLIDWSLILNTREYESEQKWEQLVFGPISQWYKYALAE</sequence>
<comment type="function">
    <text evidence="4 5 6 7">Serine-type endopeptidase that cleaves Gly-Gly bonds in the polyglycine linker of host plant class IV chitinases to disrupt their chitin-binding, and thereby plays a role in lowering the defense responses of the host to the fungus (PubMed:24627966, PubMed:25966977, PubMed:35240278, PubMed:36762862). Degrades Z.mays Endochitinase A (CHIA) (PubMed:24627966, PubMed:25966977, PubMed:35240278, PubMed:36762862). Degrades Z.mays Endochitinase B (CHIB) (PubMed:24627966, PubMed:25966977). Has no activity on Z.mays CHIA following CHIA cleavage by fungalysin (PubMed:24627966).</text>
</comment>
<comment type="catalytic activity">
    <reaction evidence="4 5 6 7">
        <text>a glycyl-glycyl-[protein] + H2O = N-terminal glycyl-[protein] + [protein]-C-terminal glycine</text>
        <dbReference type="Rhea" id="RHEA:76243"/>
        <dbReference type="Rhea" id="RHEA-COMP:12666"/>
        <dbReference type="Rhea" id="RHEA-COMP:15093"/>
        <dbReference type="Rhea" id="RHEA-COMP:18656"/>
        <dbReference type="ChEBI" id="CHEBI:15377"/>
        <dbReference type="ChEBI" id="CHEBI:64723"/>
        <dbReference type="ChEBI" id="CHEBI:83148"/>
        <dbReference type="ChEBI" id="CHEBI:195192"/>
    </reaction>
</comment>
<comment type="activity regulation">
    <text evidence="5">Not inhibited by phenylmethylsulfonyl fluoride (PMSF; serine peptidase class S1 inhibitor), clavulanic acid (beta-lactamase inhibitor) or ampicillin (penicillin-binding protein (PBP) inhibitor).</text>
</comment>
<comment type="subcellular location">
    <subcellularLocation>
        <location evidence="4 5 6 7">Secreted</location>
    </subcellularLocation>
</comment>
<comment type="similarity">
    <text evidence="10">Belongs to the peptidase S12 family.</text>
</comment>
<proteinExistence type="evidence at protein level"/>
<feature type="signal peptide" evidence="2">
    <location>
        <begin position="1"/>
        <end position="23"/>
    </location>
</feature>
<feature type="chain" id="PRO_5002030904" description="Polyglycine hydrolase" evidence="2">
    <location>
        <begin position="24"/>
        <end position="642"/>
    </location>
</feature>
<feature type="active site" evidence="11">
    <location>
        <position position="370"/>
    </location>
</feature>
<feature type="glycosylation site" description="N-linked (GlcNAc...) asparagine" evidence="3">
    <location>
        <position position="37"/>
    </location>
</feature>
<feature type="glycosylation site" description="N-linked (GlcNAc...) asparagine" evidence="5">
    <location>
        <position position="100"/>
    </location>
</feature>
<feature type="glycosylation site" description="N-linked (GlcNAc...) asparagine" evidence="3">
    <location>
        <position position="159"/>
    </location>
</feature>
<feature type="glycosylation site" description="N-linked (GlcNAc...) asparagine" evidence="5">
    <location>
        <position position="341"/>
    </location>
</feature>
<feature type="glycosylation site" description="N-linked (GlcNAc...) asparagine" evidence="5">
    <location>
        <position position="390"/>
    </location>
</feature>
<feature type="glycosylation site" description="N-linked (GlcNAc...) asparagine" evidence="3">
    <location>
        <position position="407"/>
    </location>
</feature>
<feature type="glycosylation site" description="N-linked (GlcNAc...) asparagine" evidence="3">
    <location>
        <position position="444"/>
    </location>
</feature>
<feature type="glycosylation site" description="N-linked (GlcNAc...) asparagine" evidence="3">
    <location>
        <position position="487"/>
    </location>
</feature>
<feature type="glycosylation site" description="N-linked (GlcNAc...) asparagine" evidence="5">
    <location>
        <position position="494"/>
    </location>
</feature>
<feature type="disulfide bond" evidence="1">
    <location>
        <begin position="149"/>
        <end position="183"/>
    </location>
</feature>
<feature type="mutagenesis site" description="Loss of catalytic activity." evidence="5">
    <original>S</original>
    <variation>G</variation>
    <location>
        <position position="370"/>
    </location>
</feature>
<evidence type="ECO:0000250" key="1">
    <source>
        <dbReference type="UniProtKB" id="C7YS44"/>
    </source>
</evidence>
<evidence type="ECO:0000255" key="2"/>
<evidence type="ECO:0000255" key="3">
    <source>
        <dbReference type="PROSITE-ProRule" id="PRU00498"/>
    </source>
</evidence>
<evidence type="ECO:0000269" key="4">
    <source>
    </source>
</evidence>
<evidence type="ECO:0000269" key="5">
    <source>
    </source>
</evidence>
<evidence type="ECO:0000269" key="6">
    <source>
    </source>
</evidence>
<evidence type="ECO:0000269" key="7">
    <source>
    </source>
</evidence>
<evidence type="ECO:0000303" key="8">
    <source>
    </source>
</evidence>
<evidence type="ECO:0000303" key="9">
    <source>
    </source>
</evidence>
<evidence type="ECO:0000305" key="10"/>
<evidence type="ECO:0000305" key="11">
    <source>
    </source>
</evidence>
<evidence type="ECO:0000312" key="12">
    <source>
        <dbReference type="EMBL" id="AIZ65945.1"/>
    </source>
</evidence>
<name>PGH_EPISO</name>
<accession>A0A0A7LRQ7</accession>
<organism>
    <name type="scientific">Epicoccum sorghinum</name>
    <name type="common">Endophyte fungus</name>
    <name type="synonym">Phoma sorghina</name>
    <dbReference type="NCBI Taxonomy" id="749593"/>
    <lineage>
        <taxon>Eukaryota</taxon>
        <taxon>Fungi</taxon>
        <taxon>Dikarya</taxon>
        <taxon>Ascomycota</taxon>
        <taxon>Pezizomycotina</taxon>
        <taxon>Dothideomycetes</taxon>
        <taxon>Pleosporomycetidae</taxon>
        <taxon>Pleosporales</taxon>
        <taxon>Pleosporineae</taxon>
        <taxon>Didymellaceae</taxon>
        <taxon>Epicoccum</taxon>
    </lineage>
</organism>
<dbReference type="EC" id="3.4.21.-" evidence="4 5 6 7"/>
<dbReference type="EMBL" id="KM492932">
    <property type="protein sequence ID" value="AIZ65945.1"/>
    <property type="molecule type" value="Genomic_DNA"/>
</dbReference>
<dbReference type="SMR" id="A0A0A7LRQ7"/>
<dbReference type="iPTMnet" id="A0A0A7LRQ7"/>
<dbReference type="GO" id="GO:0005576">
    <property type="term" value="C:extracellular region"/>
    <property type="evidence" value="ECO:0000314"/>
    <property type="project" value="UniProtKB"/>
</dbReference>
<dbReference type="GO" id="GO:0004252">
    <property type="term" value="F:serine-type endopeptidase activity"/>
    <property type="evidence" value="ECO:0000314"/>
    <property type="project" value="UniProtKB"/>
</dbReference>
<dbReference type="GO" id="GO:0140590">
    <property type="term" value="P:effector-mediated suppression of host defense response"/>
    <property type="evidence" value="ECO:0000314"/>
    <property type="project" value="UniProtKB"/>
</dbReference>
<dbReference type="Gene3D" id="3.40.710.10">
    <property type="entry name" value="DD-peptidase/beta-lactamase superfamily"/>
    <property type="match status" value="1"/>
</dbReference>
<dbReference type="InterPro" id="IPR050491">
    <property type="entry name" value="Bact_CellWall_Synth/Modif"/>
</dbReference>
<dbReference type="InterPro" id="IPR001466">
    <property type="entry name" value="Beta-lactam-related"/>
</dbReference>
<dbReference type="InterPro" id="IPR012338">
    <property type="entry name" value="Beta-lactam/transpept-like"/>
</dbReference>
<dbReference type="InterPro" id="IPR049511">
    <property type="entry name" value="PGH-like_rpt"/>
</dbReference>
<dbReference type="PANTHER" id="PTHR46825:SF9">
    <property type="entry name" value="BETA-LACTAMASE-RELATED DOMAIN-CONTAINING PROTEIN"/>
    <property type="match status" value="1"/>
</dbReference>
<dbReference type="PANTHER" id="PTHR46825">
    <property type="entry name" value="D-ALANYL-D-ALANINE-CARBOXYPEPTIDASE/ENDOPEPTIDASE AMPH"/>
    <property type="match status" value="1"/>
</dbReference>
<dbReference type="Pfam" id="PF00144">
    <property type="entry name" value="Beta-lactamase"/>
    <property type="match status" value="1"/>
</dbReference>
<dbReference type="Pfam" id="PF17660">
    <property type="entry name" value="BTRD1"/>
    <property type="match status" value="3"/>
</dbReference>
<dbReference type="SUPFAM" id="SSF56601">
    <property type="entry name" value="beta-lactamase/transpeptidase-like"/>
    <property type="match status" value="1"/>
</dbReference>